<protein>
    <recommendedName>
        <fullName evidence="9">Acid-sensing ion channel 1A</fullName>
        <shortName evidence="9">ASIC1-A</shortName>
    </recommendedName>
    <alternativeName>
        <fullName>Acid-sensing ion channel 1.2-A</fullName>
    </alternativeName>
    <alternativeName>
        <fullName>Amiloride-sensitive cation channel 2-B, neuronal-A</fullName>
    </alternativeName>
    <alternativeName>
        <fullName evidence="7">ZASIC1.2</fullName>
    </alternativeName>
</protein>
<feature type="chain" id="PRO_0000181297" description="Acid-sensing ion channel 1A">
    <location>
        <begin position="1"/>
        <end position="501"/>
    </location>
</feature>
<feature type="topological domain" description="Cytoplasmic" evidence="2">
    <location>
        <begin position="1"/>
        <end position="54"/>
    </location>
</feature>
<feature type="transmembrane region" description="Helical" evidence="2">
    <location>
        <begin position="55"/>
        <end position="71"/>
    </location>
</feature>
<feature type="topological domain" description="Extracellular" evidence="2">
    <location>
        <begin position="72"/>
        <end position="429"/>
    </location>
</feature>
<feature type="transmembrane region" description="Discontinuously helical" evidence="2">
    <location>
        <begin position="430"/>
        <end position="460"/>
    </location>
</feature>
<feature type="topological domain" description="Cytoplasmic" evidence="2">
    <location>
        <begin position="461"/>
        <end position="501"/>
    </location>
</feature>
<feature type="short sequence motif" description="GAS motif; ion selectivity filter" evidence="3">
    <location>
        <begin position="446"/>
        <end position="448"/>
    </location>
</feature>
<feature type="site" description="Involved in channel desensitization; the process by which the channel becomes unresponsive to proton stimulation" evidence="3">
    <location>
        <position position="84"/>
    </location>
</feature>
<feature type="site" description="Involved in proton-dependent gating" evidence="2">
    <location>
        <position position="359"/>
    </location>
</feature>
<feature type="glycosylation site" description="N-linked (GlcNAc...) asparagine" evidence="5">
    <location>
        <position position="164"/>
    </location>
</feature>
<feature type="glycosylation site" description="N-linked (GlcNAc...) asparagine" evidence="5">
    <location>
        <position position="370"/>
    </location>
</feature>
<feature type="disulfide bond" evidence="3">
    <location>
        <begin position="98"/>
        <end position="199"/>
    </location>
</feature>
<feature type="disulfide bond" evidence="3">
    <location>
        <begin position="177"/>
        <end position="184"/>
    </location>
</feature>
<feature type="disulfide bond" evidence="3">
    <location>
        <begin position="294"/>
        <end position="369"/>
    </location>
</feature>
<feature type="disulfide bond" evidence="3">
    <location>
        <begin position="312"/>
        <end position="365"/>
    </location>
</feature>
<feature type="disulfide bond" evidence="3">
    <location>
        <begin position="316"/>
        <end position="363"/>
    </location>
</feature>
<feature type="disulfide bond" evidence="3">
    <location>
        <begin position="325"/>
        <end position="347"/>
    </location>
</feature>
<feature type="disulfide bond" evidence="3">
    <location>
        <begin position="327"/>
        <end position="339"/>
    </location>
</feature>
<proteinExistence type="evidence at protein level"/>
<reference key="1">
    <citation type="journal article" date="2004" name="J. Biol. Chem.">
        <title>A family of acid-sensing ion channels (ASICs) from the zebrafish: widespread expression in the central nervous system suggests a conserved role in neuronal communication.</title>
        <authorList>
            <person name="Paukert M."/>
            <person name="Sidi S."/>
            <person name="Russell C."/>
            <person name="Siba M."/>
            <person name="Wilson S.W."/>
            <person name="Nicolson T."/>
            <person name="Gruender S."/>
        </authorList>
    </citation>
    <scope>NUCLEOTIDE SEQUENCE [MRNA]</scope>
    <scope>FUNCTION</scope>
    <scope>TRANSPORTER ACTIVITY</scope>
    <scope>ACTIVITY REGULATION</scope>
    <scope>INTERACTION WITH ASIC1C</scope>
    <scope>SUBCELLULAR LOCATION</scope>
    <scope>TISSUE SPECIFICITY</scope>
    <scope>DEVELOPMENTAL STAGE</scope>
</reference>
<comment type="function">
    <text evidence="2 6">Forms voltage-independent, pH-gated trimeric sodium channels that act as postsynaptic excitatory receptors in the nervous system, playing a crucial role in regulating synaptic plasticity, learning, and memory (PubMed:14970195). Upon extracellular pH drop this channel elicits transient, fast activating, and completely desensitizing inward currents (PubMed:14970195). Displays high selectivity for sodium ions but can also permit the permeation of other cations (By similarity).</text>
</comment>
<comment type="catalytic activity">
    <reaction evidence="6">
        <text>Na(+)(in) = Na(+)(out)</text>
        <dbReference type="Rhea" id="RHEA:34963"/>
        <dbReference type="ChEBI" id="CHEBI:29101"/>
    </reaction>
</comment>
<comment type="catalytic activity">
    <reaction evidence="2">
        <text>K(+)(in) = K(+)(out)</text>
        <dbReference type="Rhea" id="RHEA:29463"/>
        <dbReference type="ChEBI" id="CHEBI:29103"/>
    </reaction>
</comment>
<comment type="catalytic activity">
    <reaction evidence="2">
        <text>Li(+)(in) = Li(+)(out)</text>
        <dbReference type="Rhea" id="RHEA:78551"/>
        <dbReference type="ChEBI" id="CHEBI:49713"/>
    </reaction>
</comment>
<comment type="catalytic activity">
    <reaction evidence="2">
        <text>Ca(2+)(in) = Ca(2+)(out)</text>
        <dbReference type="Rhea" id="RHEA:29671"/>
        <dbReference type="ChEBI" id="CHEBI:29108"/>
    </reaction>
</comment>
<comment type="activity regulation">
    <text evidence="6">Inhibited by the diuretic drug amiloride.</text>
</comment>
<comment type="subunit">
    <text evidence="1 6 9">Homotrimer (Probable). Heterotrimer; with other ASIC proteins producing channel with different properties (Probable). Interacts with asic1c.</text>
</comment>
<comment type="subcellular location">
    <subcellularLocation>
        <location evidence="6">Cell membrane</location>
        <topology evidence="3">Multi-pass membrane protein</topology>
    </subcellularLocation>
    <subcellularLocation>
        <location evidence="9">Postsynaptic cell membrane</location>
    </subcellularLocation>
    <subcellularLocation>
        <location evidence="4">Cell projection</location>
        <location evidence="4">Dendrite</location>
    </subcellularLocation>
</comment>
<comment type="tissue specificity">
    <text evidence="6">Expressed in central nervous system. Faintly expressed in the trunk, presumably in dorsal root ganglia.</text>
</comment>
<comment type="developmental stage">
    <text evidence="6">First detected 48 hours post-fertilization (hpf) in the ventral thalamus, ventral midbrain, ventral cerebellum, ventral hindbrain, dorsal thalamus, hypothalamus, telencephalon, along the tract of the anterior commissure. Weakly expressed in the dorsal midbrain and olfactory bulb. Expression increases by 96 hpf and is detected in the tectum and trunk.</text>
</comment>
<comment type="domain">
    <text evidence="3">The second transmembrane domain (TM2) is a discontinuous alpha-helix disrupted by the GAS motif, which forms the selectivity filter by adopting an extended, belt-like conformation aligned approximately parallel to the membrane plane. This peptide belt encircles the waist of the channel and divides TM2 into two discontinuous helical segments. The distal helical segment of TM2 interacts with the cytoplasmic portion of the first transmembrane domain (TM1) from a neighboring subunit, contributing to the structural and functional integrity of the channel.</text>
</comment>
<comment type="similarity">
    <text evidence="8">Belongs to the amiloride-sensitive sodium channel (TC 1.A.6) family. ASIC1 subfamily.</text>
</comment>
<gene>
    <name type="primary">asic1a</name>
    <name type="synonym">accn2b</name>
</gene>
<dbReference type="EMBL" id="AJ609616">
    <property type="protein sequence ID" value="CAE81919.1"/>
    <property type="molecule type" value="mRNA"/>
</dbReference>
<dbReference type="RefSeq" id="NP_999955.1">
    <property type="nucleotide sequence ID" value="NM_214790.2"/>
</dbReference>
<dbReference type="RefSeq" id="XP_009302015.1">
    <property type="nucleotide sequence ID" value="XM_009303740.2"/>
</dbReference>
<dbReference type="SMR" id="Q708S7"/>
<dbReference type="FunCoup" id="Q708S7">
    <property type="interactions" value="292"/>
</dbReference>
<dbReference type="STRING" id="7955.ENSDARP00000011782"/>
<dbReference type="GlyCosmos" id="Q708S7">
    <property type="glycosylation" value="2 sites, No reported glycans"/>
</dbReference>
<dbReference type="PaxDb" id="7955-ENSDARP00000096318"/>
<dbReference type="Ensembl" id="ENSDART00000004588">
    <property type="protein sequence ID" value="ENSDARP00000011782"/>
    <property type="gene ID" value="ENSDARG00000008329"/>
</dbReference>
<dbReference type="GeneID" id="791696"/>
<dbReference type="KEGG" id="dre:791696"/>
<dbReference type="AGR" id="ZFIN:ZDB-GENE-040513-2"/>
<dbReference type="CTD" id="791696"/>
<dbReference type="ZFIN" id="ZDB-GENE-040513-2">
    <property type="gene designation" value="asic1a"/>
</dbReference>
<dbReference type="eggNOG" id="KOG4294">
    <property type="taxonomic scope" value="Eukaryota"/>
</dbReference>
<dbReference type="HOGENOM" id="CLU_020415_1_2_1"/>
<dbReference type="InParanoid" id="Q708S7"/>
<dbReference type="OMA" id="EVAASHM"/>
<dbReference type="OrthoDB" id="6021021at2759"/>
<dbReference type="PhylomeDB" id="Q708S7"/>
<dbReference type="TreeFam" id="TF330663"/>
<dbReference type="Reactome" id="R-DRE-2672351">
    <property type="pathway name" value="Stimuli-sensing channels"/>
</dbReference>
<dbReference type="PRO" id="PR:Q708S7"/>
<dbReference type="Proteomes" id="UP000000437">
    <property type="component" value="Chromosome 8"/>
</dbReference>
<dbReference type="Bgee" id="ENSDARG00000008329">
    <property type="expression patterns" value="Expressed in brain and 4 other cell types or tissues"/>
</dbReference>
<dbReference type="ExpressionAtlas" id="Q708S7">
    <property type="expression patterns" value="baseline and differential"/>
</dbReference>
<dbReference type="GO" id="GO:0030425">
    <property type="term" value="C:dendrite"/>
    <property type="evidence" value="ECO:0007669"/>
    <property type="project" value="UniProtKB-SubCell"/>
</dbReference>
<dbReference type="GO" id="GO:0005886">
    <property type="term" value="C:plasma membrane"/>
    <property type="evidence" value="ECO:0000314"/>
    <property type="project" value="ZFIN"/>
</dbReference>
<dbReference type="GO" id="GO:0045211">
    <property type="term" value="C:postsynaptic membrane"/>
    <property type="evidence" value="ECO:0007669"/>
    <property type="project" value="UniProtKB-SubCell"/>
</dbReference>
<dbReference type="GO" id="GO:0015280">
    <property type="term" value="F:ligand-gated sodium channel activity"/>
    <property type="evidence" value="ECO:0000314"/>
    <property type="project" value="ZFIN"/>
</dbReference>
<dbReference type="GO" id="GO:0005261">
    <property type="term" value="F:monoatomic cation channel activity"/>
    <property type="evidence" value="ECO:0000316"/>
    <property type="project" value="ZFIN"/>
</dbReference>
<dbReference type="GO" id="GO:0160128">
    <property type="term" value="F:pH-gated monoatomic ion channel activity"/>
    <property type="evidence" value="ECO:0000250"/>
    <property type="project" value="UniProtKB"/>
</dbReference>
<dbReference type="GO" id="GO:0071467">
    <property type="term" value="P:cellular response to pH"/>
    <property type="evidence" value="ECO:0000250"/>
    <property type="project" value="UniProtKB"/>
</dbReference>
<dbReference type="GO" id="GO:0035725">
    <property type="term" value="P:sodium ion transmembrane transport"/>
    <property type="evidence" value="ECO:0000318"/>
    <property type="project" value="GO_Central"/>
</dbReference>
<dbReference type="FunFam" id="1.10.287.820:FF:000001">
    <property type="entry name" value="acid-sensing ion channel 1 isoform X2"/>
    <property type="match status" value="1"/>
</dbReference>
<dbReference type="FunFam" id="1.10.3590.10:FF:000002">
    <property type="entry name" value="acid-sensing ion channel 1 isoform X2"/>
    <property type="match status" value="1"/>
</dbReference>
<dbReference type="FunFam" id="1.10.287.770:FF:000001">
    <property type="entry name" value="Acid-sensing ion channel subunit 1"/>
    <property type="match status" value="1"/>
</dbReference>
<dbReference type="Gene3D" id="1.10.3590.10">
    <property type="entry name" value="acid-sensing ion channel 1 domain"/>
    <property type="match status" value="2"/>
</dbReference>
<dbReference type="Gene3D" id="1.10.287.820">
    <property type="entry name" value="Acid-sensing ion channel domain"/>
    <property type="match status" value="1"/>
</dbReference>
<dbReference type="Gene3D" id="1.10.287.770">
    <property type="entry name" value="YojJ-like"/>
    <property type="match status" value="2"/>
</dbReference>
<dbReference type="InterPro" id="IPR001873">
    <property type="entry name" value="ENaC"/>
</dbReference>
<dbReference type="InterPro" id="IPR004724">
    <property type="entry name" value="ENaC_chordates"/>
</dbReference>
<dbReference type="InterPro" id="IPR020903">
    <property type="entry name" value="ENaC_CS"/>
</dbReference>
<dbReference type="NCBIfam" id="TIGR00859">
    <property type="entry name" value="ENaC"/>
    <property type="match status" value="1"/>
</dbReference>
<dbReference type="PANTHER" id="PTHR11690:SF170">
    <property type="entry name" value="ACID-SENSING ION CHANNEL 1"/>
    <property type="match status" value="1"/>
</dbReference>
<dbReference type="PANTHER" id="PTHR11690">
    <property type="entry name" value="AMILORIDE-SENSITIVE SODIUM CHANNEL-RELATED"/>
    <property type="match status" value="1"/>
</dbReference>
<dbReference type="Pfam" id="PF00858">
    <property type="entry name" value="ASC"/>
    <property type="match status" value="1"/>
</dbReference>
<dbReference type="PRINTS" id="PR01078">
    <property type="entry name" value="AMINACHANNEL"/>
</dbReference>
<dbReference type="PROSITE" id="PS01206">
    <property type="entry name" value="ASC"/>
    <property type="match status" value="1"/>
</dbReference>
<name>ASI1A_DANRE</name>
<sequence length="501" mass="57419">MKTSVMDLKVEPMDIDFDQPPPLQVFAHTSTLHGISHIFSYEKITAKCCLWVVFFLSSLTFLMYVCIDRIQFYLEYPHVTKLDEITTPVMVFPAVTICNLNSIRFSRITRNDLYHAGELLALLNSRHEVREAHLVEESVMEVLKSKTDFRSFKPRHFNMWEFYNRTGHDIKDMLLSCQFRGSPCRPEDFSVVFTRYGKCYTFNSGETGPPRVSVKGGMGNGLEIMLDIQQDEYLPVWGESDESSFEAGIKVQIHSQDEPPFIDQLGFGVAPGFQTFVSCQEQRLVYLPAPWGSCKSTPPSSDYFRAYSISACRTDCETRYLVENCNCRMVHMPGDAPYCTPVLYKECAHPALDFLVETDSDYCSCETPCNITRYSKELSFVKIPSKASVKYLAKKYSKSEKYITENVMVLDVFFEALNYETIEQRKAYEVAGLLGDIGGQMGLFIGASILTILELFDYLYEVMKYRLCRCSNKKHHNNNNNTDHNAVFSLDDVNCHVSKFH</sequence>
<evidence type="ECO:0000250" key="1"/>
<evidence type="ECO:0000250" key="2">
    <source>
        <dbReference type="UniProtKB" id="P78348"/>
    </source>
</evidence>
<evidence type="ECO:0000250" key="3">
    <source>
        <dbReference type="UniProtKB" id="Q1XA76"/>
    </source>
</evidence>
<evidence type="ECO:0000250" key="4">
    <source>
        <dbReference type="UniProtKB" id="Q6NXK8"/>
    </source>
</evidence>
<evidence type="ECO:0000255" key="5"/>
<evidence type="ECO:0000269" key="6">
    <source>
    </source>
</evidence>
<evidence type="ECO:0000303" key="7">
    <source>
    </source>
</evidence>
<evidence type="ECO:0000305" key="8"/>
<evidence type="ECO:0000305" key="9">
    <source>
    </source>
</evidence>
<keyword id="KW-1003">Cell membrane</keyword>
<keyword id="KW-0966">Cell projection</keyword>
<keyword id="KW-1015">Disulfide bond</keyword>
<keyword id="KW-0325">Glycoprotein</keyword>
<keyword id="KW-0407">Ion channel</keyword>
<keyword id="KW-0406">Ion transport</keyword>
<keyword id="KW-0472">Membrane</keyword>
<keyword id="KW-0628">Postsynaptic cell membrane</keyword>
<keyword id="KW-1185">Reference proteome</keyword>
<keyword id="KW-0915">Sodium</keyword>
<keyword id="KW-0894">Sodium channel</keyword>
<keyword id="KW-0739">Sodium transport</keyword>
<keyword id="KW-0770">Synapse</keyword>
<keyword id="KW-0812">Transmembrane</keyword>
<keyword id="KW-1133">Transmembrane helix</keyword>
<keyword id="KW-0813">Transport</keyword>
<accession>Q708S7</accession>
<organism>
    <name type="scientific">Danio rerio</name>
    <name type="common">Zebrafish</name>
    <name type="synonym">Brachydanio rerio</name>
    <dbReference type="NCBI Taxonomy" id="7955"/>
    <lineage>
        <taxon>Eukaryota</taxon>
        <taxon>Metazoa</taxon>
        <taxon>Chordata</taxon>
        <taxon>Craniata</taxon>
        <taxon>Vertebrata</taxon>
        <taxon>Euteleostomi</taxon>
        <taxon>Actinopterygii</taxon>
        <taxon>Neopterygii</taxon>
        <taxon>Teleostei</taxon>
        <taxon>Ostariophysi</taxon>
        <taxon>Cypriniformes</taxon>
        <taxon>Danionidae</taxon>
        <taxon>Danioninae</taxon>
        <taxon>Danio</taxon>
    </lineage>
</organism>